<accession>B5G6H0</accession>
<evidence type="ECO:0000250" key="1">
    <source>
        <dbReference type="UniProtKB" id="P83952"/>
    </source>
</evidence>
<evidence type="ECO:0000255" key="2"/>
<evidence type="ECO:0000255" key="3">
    <source>
        <dbReference type="PROSITE-ProRule" id="PRU00722"/>
    </source>
</evidence>
<evidence type="ECO:0000303" key="4">
    <source ref="1"/>
</evidence>
<evidence type="ECO:0000305" key="5"/>
<evidence type="ECO:0000305" key="6">
    <source ref="1"/>
</evidence>
<reference key="1">
    <citation type="submission" date="2006-08" db="EMBL/GenBank/DDBJ databases">
        <title>Waprins: a distinct toxin family from the venom of Australian elapid snakes.</title>
        <authorList>
            <person name="St Pierre L."/>
        </authorList>
    </citation>
    <scope>NUCLEOTIDE SEQUENCE [MRNA]</scope>
    <source>
        <tissue>Venom gland</tissue>
    </source>
</reference>
<comment type="function">
    <text evidence="1">Damages membranes of susceptible bacteria. Has no hemolytic activity. Not toxic to mice. Does not inhibit the proteinases elastase and cathepsin G.</text>
</comment>
<comment type="subcellular location">
    <subcellularLocation>
        <location evidence="6">Secreted</location>
    </subcellularLocation>
</comment>
<comment type="tissue specificity">
    <text evidence="6">Expressed by the venom gland.</text>
</comment>
<comment type="similarity">
    <text evidence="5">Belongs to the venom waprin family.</text>
</comment>
<name>WAPA_PSEPO</name>
<sequence>MSSGGLLLLLGLLTLWEVLTPVSSKDRPKKLGLCPPRPQKPCVKECKNDWSCPGQQKCCNYGCIDECRDPIFVN</sequence>
<keyword id="KW-0044">Antibiotic</keyword>
<keyword id="KW-0929">Antimicrobial</keyword>
<keyword id="KW-1015">Disulfide bond</keyword>
<keyword id="KW-0964">Secreted</keyword>
<keyword id="KW-0732">Signal</keyword>
<proteinExistence type="inferred from homology"/>
<organism>
    <name type="scientific">Pseudechis porphyriacus</name>
    <name type="common">Red-bellied black snake</name>
    <dbReference type="NCBI Taxonomy" id="8671"/>
    <lineage>
        <taxon>Eukaryota</taxon>
        <taxon>Metazoa</taxon>
        <taxon>Chordata</taxon>
        <taxon>Craniata</taxon>
        <taxon>Vertebrata</taxon>
        <taxon>Euteleostomi</taxon>
        <taxon>Lepidosauria</taxon>
        <taxon>Squamata</taxon>
        <taxon>Bifurcata</taxon>
        <taxon>Unidentata</taxon>
        <taxon>Episquamata</taxon>
        <taxon>Toxicofera</taxon>
        <taxon>Serpentes</taxon>
        <taxon>Colubroidea</taxon>
        <taxon>Elapidae</taxon>
        <taxon>Hydrophiinae</taxon>
        <taxon>Pseudechis</taxon>
    </lineage>
</organism>
<dbReference type="EMBL" id="DQ917557">
    <property type="protein sequence ID" value="ABK63586.1"/>
    <property type="molecule type" value="mRNA"/>
</dbReference>
<dbReference type="SMR" id="B5G6H0"/>
<dbReference type="GO" id="GO:0005576">
    <property type="term" value="C:extracellular region"/>
    <property type="evidence" value="ECO:0000250"/>
    <property type="project" value="UniProtKB"/>
</dbReference>
<dbReference type="GO" id="GO:0005615">
    <property type="term" value="C:extracellular space"/>
    <property type="evidence" value="ECO:0007669"/>
    <property type="project" value="TreeGrafter"/>
</dbReference>
<dbReference type="GO" id="GO:0004867">
    <property type="term" value="F:serine-type endopeptidase inhibitor activity"/>
    <property type="evidence" value="ECO:0007669"/>
    <property type="project" value="TreeGrafter"/>
</dbReference>
<dbReference type="GO" id="GO:0019731">
    <property type="term" value="P:antibacterial humoral response"/>
    <property type="evidence" value="ECO:0007669"/>
    <property type="project" value="TreeGrafter"/>
</dbReference>
<dbReference type="GO" id="GO:0045087">
    <property type="term" value="P:innate immune response"/>
    <property type="evidence" value="ECO:0007669"/>
    <property type="project" value="TreeGrafter"/>
</dbReference>
<dbReference type="GO" id="GO:0044278">
    <property type="term" value="P:venom-mediated disruption of cell wall in another organism"/>
    <property type="evidence" value="ECO:0000250"/>
    <property type="project" value="UniProtKB"/>
</dbReference>
<dbReference type="Gene3D" id="4.10.75.10">
    <property type="entry name" value="Elafin-like"/>
    <property type="match status" value="1"/>
</dbReference>
<dbReference type="InterPro" id="IPR036645">
    <property type="entry name" value="Elafin-like_sf"/>
</dbReference>
<dbReference type="InterPro" id="IPR008197">
    <property type="entry name" value="WAP_dom"/>
</dbReference>
<dbReference type="InterPro" id="IPR050514">
    <property type="entry name" value="WAP_four-disulfide_core"/>
</dbReference>
<dbReference type="PANTHER" id="PTHR19441:SF30">
    <property type="entry name" value="ELAFIN"/>
    <property type="match status" value="1"/>
</dbReference>
<dbReference type="PANTHER" id="PTHR19441">
    <property type="entry name" value="WHEY ACDIC PROTEIN WAP"/>
    <property type="match status" value="1"/>
</dbReference>
<dbReference type="Pfam" id="PF00095">
    <property type="entry name" value="WAP"/>
    <property type="match status" value="1"/>
</dbReference>
<dbReference type="PRINTS" id="PR00003">
    <property type="entry name" value="4DISULPHCORE"/>
</dbReference>
<dbReference type="SMART" id="SM00217">
    <property type="entry name" value="WAP"/>
    <property type="match status" value="1"/>
</dbReference>
<dbReference type="SUPFAM" id="SSF57256">
    <property type="entry name" value="Elafin-like"/>
    <property type="match status" value="1"/>
</dbReference>
<dbReference type="PROSITE" id="PS51390">
    <property type="entry name" value="WAP"/>
    <property type="match status" value="1"/>
</dbReference>
<feature type="signal peptide" evidence="2">
    <location>
        <begin position="1"/>
        <end position="24"/>
    </location>
</feature>
<feature type="chain" id="PRO_5000395570" description="Porwaprin-a">
    <location>
        <begin position="25"/>
        <end position="74"/>
    </location>
</feature>
<feature type="domain" description="WAP" evidence="3">
    <location>
        <begin position="27"/>
        <end position="71"/>
    </location>
</feature>
<feature type="disulfide bond" evidence="3">
    <location>
        <begin position="34"/>
        <end position="59"/>
    </location>
</feature>
<feature type="disulfide bond" evidence="3">
    <location>
        <begin position="42"/>
        <end position="63"/>
    </location>
</feature>
<feature type="disulfide bond" evidence="3">
    <location>
        <begin position="46"/>
        <end position="58"/>
    </location>
</feature>
<feature type="disulfide bond" evidence="3">
    <location>
        <begin position="52"/>
        <end position="67"/>
    </location>
</feature>
<protein>
    <recommendedName>
        <fullName evidence="4">Porwaprin-a</fullName>
    </recommendedName>
</protein>